<sequence>MWNPNAGPNPYPPQVVCPGGSNPACPPPLNPAFPPGPCPPGIPQGNPAFPPCRPPYPVPQPGCPGYQPSGPYPPPYPPPAPGMCPVNPPAPGMVGPGIVIDKKTRKKMKKAHKKSHKHHKHGKHSSSSSSSSSSDSD</sequence>
<comment type="function">
    <text evidence="1">Negatively regulates TSP1 expression at the level of transcription. This down-regulation was shown to reduce taxane-induced apoptosis (By similarity).</text>
</comment>
<comment type="subcellular location">
    <subcellularLocation>
        <location evidence="1">Nucleus</location>
    </subcellularLocation>
</comment>
<organism>
    <name type="scientific">Mus musculus</name>
    <name type="common">Mouse</name>
    <dbReference type="NCBI Taxonomy" id="10090"/>
    <lineage>
        <taxon>Eukaryota</taxon>
        <taxon>Metazoa</taxon>
        <taxon>Chordata</taxon>
        <taxon>Craniata</taxon>
        <taxon>Vertebrata</taxon>
        <taxon>Euteleostomi</taxon>
        <taxon>Mammalia</taxon>
        <taxon>Eutheria</taxon>
        <taxon>Euarchontoglires</taxon>
        <taxon>Glires</taxon>
        <taxon>Rodentia</taxon>
        <taxon>Myomorpha</taxon>
        <taxon>Muroidea</taxon>
        <taxon>Muridae</taxon>
        <taxon>Murinae</taxon>
        <taxon>Mus</taxon>
        <taxon>Mus</taxon>
    </lineage>
</organism>
<name>PRR13_MOUSE</name>
<keyword id="KW-0539">Nucleus</keyword>
<keyword id="KW-1185">Reference proteome</keyword>
<keyword id="KW-0804">Transcription</keyword>
<keyword id="KW-0805">Transcription regulation</keyword>
<gene>
    <name type="primary">Prr13</name>
</gene>
<evidence type="ECO:0000250" key="1"/>
<evidence type="ECO:0000256" key="2">
    <source>
        <dbReference type="SAM" id="MobiDB-lite"/>
    </source>
</evidence>
<evidence type="ECO:0000305" key="3"/>
<accession>Q9CQJ5</accession>
<accession>Q3U3U4</accession>
<feature type="chain" id="PRO_0000243947" description="Proline-rich protein 13">
    <location>
        <begin position="1"/>
        <end position="137"/>
    </location>
</feature>
<feature type="region of interest" description="Disordered" evidence="2">
    <location>
        <begin position="26"/>
        <end position="54"/>
    </location>
</feature>
<feature type="region of interest" description="Disordered" evidence="2">
    <location>
        <begin position="94"/>
        <end position="137"/>
    </location>
</feature>
<feature type="compositionally biased region" description="Basic residues" evidence="2">
    <location>
        <begin position="103"/>
        <end position="124"/>
    </location>
</feature>
<feature type="compositionally biased region" description="Low complexity" evidence="2">
    <location>
        <begin position="125"/>
        <end position="137"/>
    </location>
</feature>
<feature type="sequence conflict" description="In Ref. 1; BAE32691." evidence="3" ref="1">
    <original>S</original>
    <variation>SS</variation>
    <location>
        <position position="134"/>
    </location>
</feature>
<reference key="1">
    <citation type="journal article" date="2005" name="Science">
        <title>The transcriptional landscape of the mammalian genome.</title>
        <authorList>
            <person name="Carninci P."/>
            <person name="Kasukawa T."/>
            <person name="Katayama S."/>
            <person name="Gough J."/>
            <person name="Frith M.C."/>
            <person name="Maeda N."/>
            <person name="Oyama R."/>
            <person name="Ravasi T."/>
            <person name="Lenhard B."/>
            <person name="Wells C."/>
            <person name="Kodzius R."/>
            <person name="Shimokawa K."/>
            <person name="Bajic V.B."/>
            <person name="Brenner S.E."/>
            <person name="Batalov S."/>
            <person name="Forrest A.R."/>
            <person name="Zavolan M."/>
            <person name="Davis M.J."/>
            <person name="Wilming L.G."/>
            <person name="Aidinis V."/>
            <person name="Allen J.E."/>
            <person name="Ambesi-Impiombato A."/>
            <person name="Apweiler R."/>
            <person name="Aturaliya R.N."/>
            <person name="Bailey T.L."/>
            <person name="Bansal M."/>
            <person name="Baxter L."/>
            <person name="Beisel K.W."/>
            <person name="Bersano T."/>
            <person name="Bono H."/>
            <person name="Chalk A.M."/>
            <person name="Chiu K.P."/>
            <person name="Choudhary V."/>
            <person name="Christoffels A."/>
            <person name="Clutterbuck D.R."/>
            <person name="Crowe M.L."/>
            <person name="Dalla E."/>
            <person name="Dalrymple B.P."/>
            <person name="de Bono B."/>
            <person name="Della Gatta G."/>
            <person name="di Bernardo D."/>
            <person name="Down T."/>
            <person name="Engstrom P."/>
            <person name="Fagiolini M."/>
            <person name="Faulkner G."/>
            <person name="Fletcher C.F."/>
            <person name="Fukushima T."/>
            <person name="Furuno M."/>
            <person name="Futaki S."/>
            <person name="Gariboldi M."/>
            <person name="Georgii-Hemming P."/>
            <person name="Gingeras T.R."/>
            <person name="Gojobori T."/>
            <person name="Green R.E."/>
            <person name="Gustincich S."/>
            <person name="Harbers M."/>
            <person name="Hayashi Y."/>
            <person name="Hensch T.K."/>
            <person name="Hirokawa N."/>
            <person name="Hill D."/>
            <person name="Huminiecki L."/>
            <person name="Iacono M."/>
            <person name="Ikeo K."/>
            <person name="Iwama A."/>
            <person name="Ishikawa T."/>
            <person name="Jakt M."/>
            <person name="Kanapin A."/>
            <person name="Katoh M."/>
            <person name="Kawasawa Y."/>
            <person name="Kelso J."/>
            <person name="Kitamura H."/>
            <person name="Kitano H."/>
            <person name="Kollias G."/>
            <person name="Krishnan S.P."/>
            <person name="Kruger A."/>
            <person name="Kummerfeld S.K."/>
            <person name="Kurochkin I.V."/>
            <person name="Lareau L.F."/>
            <person name="Lazarevic D."/>
            <person name="Lipovich L."/>
            <person name="Liu J."/>
            <person name="Liuni S."/>
            <person name="McWilliam S."/>
            <person name="Madan Babu M."/>
            <person name="Madera M."/>
            <person name="Marchionni L."/>
            <person name="Matsuda H."/>
            <person name="Matsuzawa S."/>
            <person name="Miki H."/>
            <person name="Mignone F."/>
            <person name="Miyake S."/>
            <person name="Morris K."/>
            <person name="Mottagui-Tabar S."/>
            <person name="Mulder N."/>
            <person name="Nakano N."/>
            <person name="Nakauchi H."/>
            <person name="Ng P."/>
            <person name="Nilsson R."/>
            <person name="Nishiguchi S."/>
            <person name="Nishikawa S."/>
            <person name="Nori F."/>
            <person name="Ohara O."/>
            <person name="Okazaki Y."/>
            <person name="Orlando V."/>
            <person name="Pang K.C."/>
            <person name="Pavan W.J."/>
            <person name="Pavesi G."/>
            <person name="Pesole G."/>
            <person name="Petrovsky N."/>
            <person name="Piazza S."/>
            <person name="Reed J."/>
            <person name="Reid J.F."/>
            <person name="Ring B.Z."/>
            <person name="Ringwald M."/>
            <person name="Rost B."/>
            <person name="Ruan Y."/>
            <person name="Salzberg S.L."/>
            <person name="Sandelin A."/>
            <person name="Schneider C."/>
            <person name="Schoenbach C."/>
            <person name="Sekiguchi K."/>
            <person name="Semple C.A."/>
            <person name="Seno S."/>
            <person name="Sessa L."/>
            <person name="Sheng Y."/>
            <person name="Shibata Y."/>
            <person name="Shimada H."/>
            <person name="Shimada K."/>
            <person name="Silva D."/>
            <person name="Sinclair B."/>
            <person name="Sperling S."/>
            <person name="Stupka E."/>
            <person name="Sugiura K."/>
            <person name="Sultana R."/>
            <person name="Takenaka Y."/>
            <person name="Taki K."/>
            <person name="Tammoja K."/>
            <person name="Tan S.L."/>
            <person name="Tang S."/>
            <person name="Taylor M.S."/>
            <person name="Tegner J."/>
            <person name="Teichmann S.A."/>
            <person name="Ueda H.R."/>
            <person name="van Nimwegen E."/>
            <person name="Verardo R."/>
            <person name="Wei C.L."/>
            <person name="Yagi K."/>
            <person name="Yamanishi H."/>
            <person name="Zabarovsky E."/>
            <person name="Zhu S."/>
            <person name="Zimmer A."/>
            <person name="Hide W."/>
            <person name="Bult C."/>
            <person name="Grimmond S.M."/>
            <person name="Teasdale R.D."/>
            <person name="Liu E.T."/>
            <person name="Brusic V."/>
            <person name="Quackenbush J."/>
            <person name="Wahlestedt C."/>
            <person name="Mattick J.S."/>
            <person name="Hume D.A."/>
            <person name="Kai C."/>
            <person name="Sasaki D."/>
            <person name="Tomaru Y."/>
            <person name="Fukuda S."/>
            <person name="Kanamori-Katayama M."/>
            <person name="Suzuki M."/>
            <person name="Aoki J."/>
            <person name="Arakawa T."/>
            <person name="Iida J."/>
            <person name="Imamura K."/>
            <person name="Itoh M."/>
            <person name="Kato T."/>
            <person name="Kawaji H."/>
            <person name="Kawagashira N."/>
            <person name="Kawashima T."/>
            <person name="Kojima M."/>
            <person name="Kondo S."/>
            <person name="Konno H."/>
            <person name="Nakano K."/>
            <person name="Ninomiya N."/>
            <person name="Nishio T."/>
            <person name="Okada M."/>
            <person name="Plessy C."/>
            <person name="Shibata K."/>
            <person name="Shiraki T."/>
            <person name="Suzuki S."/>
            <person name="Tagami M."/>
            <person name="Waki K."/>
            <person name="Watahiki A."/>
            <person name="Okamura-Oho Y."/>
            <person name="Suzuki H."/>
            <person name="Kawai J."/>
            <person name="Hayashizaki Y."/>
        </authorList>
    </citation>
    <scope>NUCLEOTIDE SEQUENCE [LARGE SCALE MRNA]</scope>
    <source>
        <strain>C57BL/6J</strain>
        <strain>NOD</strain>
        <tissue>Kidney</tissue>
        <tissue>Small intestine</tissue>
        <tissue>Stomach</tissue>
    </source>
</reference>
<reference key="2">
    <citation type="journal article" date="2004" name="Genome Res.">
        <title>The status, quality, and expansion of the NIH full-length cDNA project: the Mammalian Gene Collection (MGC).</title>
        <authorList>
            <consortium name="The MGC Project Team"/>
        </authorList>
    </citation>
    <scope>NUCLEOTIDE SEQUENCE [LARGE SCALE MRNA]</scope>
    <source>
        <tissue>Eye</tissue>
    </source>
</reference>
<proteinExistence type="evidence at transcript level"/>
<dbReference type="EMBL" id="AK002430">
    <property type="protein sequence ID" value="BAB22096.1"/>
    <property type="molecule type" value="mRNA"/>
</dbReference>
<dbReference type="EMBL" id="AK003850">
    <property type="protein sequence ID" value="BAB23035.1"/>
    <property type="molecule type" value="mRNA"/>
</dbReference>
<dbReference type="EMBL" id="AK008611">
    <property type="protein sequence ID" value="BAB25776.1"/>
    <property type="molecule type" value="mRNA"/>
</dbReference>
<dbReference type="EMBL" id="AK008894">
    <property type="protein sequence ID" value="BAB25957.1"/>
    <property type="molecule type" value="mRNA"/>
</dbReference>
<dbReference type="EMBL" id="AK154583">
    <property type="protein sequence ID" value="BAE32691.1"/>
    <property type="molecule type" value="mRNA"/>
</dbReference>
<dbReference type="EMBL" id="BC016234">
    <property type="protein sequence ID" value="AAH16234.1"/>
    <property type="molecule type" value="mRNA"/>
</dbReference>
<dbReference type="CCDS" id="CCDS27883.1"/>
<dbReference type="RefSeq" id="NP_001164382.1">
    <property type="nucleotide sequence ID" value="NM_001170911.1"/>
</dbReference>
<dbReference type="RefSeq" id="NP_079661.1">
    <property type="nucleotide sequence ID" value="NM_025385.3"/>
</dbReference>
<dbReference type="SMR" id="Q9CQJ5"/>
<dbReference type="FunCoup" id="Q9CQJ5">
    <property type="interactions" value="497"/>
</dbReference>
<dbReference type="STRING" id="10090.ENSMUSP00000132636"/>
<dbReference type="PhosphoSitePlus" id="Q9CQJ5"/>
<dbReference type="PaxDb" id="10090-ENSMUSP00000023810"/>
<dbReference type="DNASU" id="66151"/>
<dbReference type="Ensembl" id="ENSMUST00000023810.12">
    <property type="protein sequence ID" value="ENSMUSP00000023810.6"/>
    <property type="gene ID" value="ENSMUSG00000023048.14"/>
</dbReference>
<dbReference type="Ensembl" id="ENSMUST00000164688.2">
    <property type="protein sequence ID" value="ENSMUSP00000130498.2"/>
    <property type="gene ID" value="ENSMUSG00000023048.14"/>
</dbReference>
<dbReference type="Ensembl" id="ENSMUST00000164957.8">
    <property type="protein sequence ID" value="ENSMUSP00000125784.2"/>
    <property type="gene ID" value="ENSMUSG00000023048.14"/>
</dbReference>
<dbReference type="Ensembl" id="ENSMUST00000171245.8">
    <property type="protein sequence ID" value="ENSMUSP00000132636.2"/>
    <property type="gene ID" value="ENSMUSG00000023048.14"/>
</dbReference>
<dbReference type="GeneID" id="66151"/>
<dbReference type="KEGG" id="mmu:66151"/>
<dbReference type="UCSC" id="uc007xvr.2">
    <property type="organism name" value="mouse"/>
</dbReference>
<dbReference type="AGR" id="MGI:1913401"/>
<dbReference type="CTD" id="54458"/>
<dbReference type="MGI" id="MGI:1913401">
    <property type="gene designation" value="Prr13"/>
</dbReference>
<dbReference type="VEuPathDB" id="HostDB:ENSMUSG00000023048"/>
<dbReference type="eggNOG" id="ENOG502R4RR">
    <property type="taxonomic scope" value="Eukaryota"/>
</dbReference>
<dbReference type="GeneTree" id="ENSGT00730000113467"/>
<dbReference type="HOGENOM" id="CLU_140437_0_0_1"/>
<dbReference type="InParanoid" id="Q9CQJ5"/>
<dbReference type="OMA" id="VNPACPP"/>
<dbReference type="BioGRID-ORCS" id="66151">
    <property type="hits" value="8 hits in 77 CRISPR screens"/>
</dbReference>
<dbReference type="ChiTaRS" id="Prr13">
    <property type="organism name" value="mouse"/>
</dbReference>
<dbReference type="PRO" id="PR:Q9CQJ5"/>
<dbReference type="Proteomes" id="UP000000589">
    <property type="component" value="Chromosome 15"/>
</dbReference>
<dbReference type="RNAct" id="Q9CQJ5">
    <property type="molecule type" value="protein"/>
</dbReference>
<dbReference type="Bgee" id="ENSMUSG00000023048">
    <property type="expression patterns" value="Expressed in granulocyte and 256 other cell types or tissues"/>
</dbReference>
<dbReference type="ExpressionAtlas" id="Q9CQJ5">
    <property type="expression patterns" value="baseline and differential"/>
</dbReference>
<dbReference type="GO" id="GO:0005634">
    <property type="term" value="C:nucleus"/>
    <property type="evidence" value="ECO:0007669"/>
    <property type="project" value="UniProtKB-SubCell"/>
</dbReference>
<dbReference type="PANTHER" id="PTHR36287">
    <property type="match status" value="1"/>
</dbReference>
<dbReference type="PANTHER" id="PTHR36287:SF1">
    <property type="entry name" value="PROLINE-RICH PROTEIN 13"/>
    <property type="match status" value="1"/>
</dbReference>
<protein>
    <recommendedName>
        <fullName>Proline-rich protein 13</fullName>
    </recommendedName>
</protein>